<protein>
    <recommendedName>
        <fullName evidence="1">Holliday junction branch migration complex subunit RuvB</fullName>
        <ecNumber evidence="1">3.6.4.-</ecNumber>
    </recommendedName>
</protein>
<comment type="function">
    <text evidence="1 2">The RuvA-RuvB-RuvC complex processes Holliday junction (HJ) DNA during genetic recombination and DNA repair, while the RuvA-RuvB complex plays an important role in the rescue of blocked DNA replication forks via replication fork reversal (RFR). RuvA specifically binds to HJ cruciform DNA, conferring on it an open structure. The RuvB hexamer acts as an ATP-dependent pump, pulling dsDNA into and through the RuvAB complex. RuvB forms 2 homohexamers on either side of HJ DNA bound by 1 or 2 RuvA tetramers; 4 subunits per hexamer contact DNA at a time. Coordinated motions by a converter formed by DNA-disengaged RuvB subunits stimulates ATP hydrolysis and nucleotide exchange. Immobilization of the converter enables RuvB to convert the ATP-contained energy into a lever motion, pulling 2 nucleotides of DNA out of the RuvA tetramer per ATP hydrolyzed, thus driving DNA branch migration. The RuvB motors rotate together with the DNA substrate, which together with the progressing nucleotide cycle form the mechanistic basis for DNA recombination by continuous HJ branch migration. Branch migration allows RuvC to scan DNA until it finds its consensus sequence, where it cleaves and resolves cruciform DNA (By similarity). In complex with Holliday junction (HJ) DNA, endogenous RuvA and ATP, catalyzes branch migration (PubMed:36002576).</text>
</comment>
<comment type="catalytic activity">
    <reaction evidence="1">
        <text>ATP + H2O = ADP + phosphate + H(+)</text>
        <dbReference type="Rhea" id="RHEA:13065"/>
        <dbReference type="ChEBI" id="CHEBI:15377"/>
        <dbReference type="ChEBI" id="CHEBI:15378"/>
        <dbReference type="ChEBI" id="CHEBI:30616"/>
        <dbReference type="ChEBI" id="CHEBI:43474"/>
        <dbReference type="ChEBI" id="CHEBI:456216"/>
    </reaction>
</comment>
<comment type="subunit">
    <text evidence="1">Homohexamer. Forms an RuvA(8)-RuvB(12)-Holliday junction (HJ) complex. HJ DNA is sandwiched between 2 RuvA tetramers; dsDNA enters through RuvA and exits via RuvB. An RuvB hexamer assembles on each DNA strand where it exits the tetramer. Each RuvB hexamer is contacted by two RuvA subunits (via domain III) on 2 adjacent RuvB subunits; this complex drives branch migration. In the full resolvosome a probable DNA-RuvA(4)-RuvB(12)-RuvC(2) complex forms which resolves the HJ.</text>
</comment>
<comment type="subcellular location">
    <subcellularLocation>
        <location evidence="1">Cytoplasm</location>
    </subcellularLocation>
</comment>
<comment type="domain">
    <text evidence="1">Has 3 domains, the large (RuvB-L) and small ATPase (RuvB-S) domains and the C-terminal head (RuvB-H) domain. The head domain binds DNA, while the ATPase domains jointly bind ATP, ADP or are empty depending on the state of the subunit in the translocation cycle. During a single DNA translocation step the structure of each domain remains the same, but their relative positions change.</text>
</comment>
<comment type="similarity">
    <text evidence="1">Belongs to the RuvB family.</text>
</comment>
<sequence>MIEADRLISAGATIAEDVADRAIRPKLLAEYVGQPQVRSQMEIFIQAAKRRGDALDHLLIFGPPGLGKTTLANIVANEMGVNLRTTSGPVLEKAGDLAAMLTNLEPHDVLFIDEIHRLSPVVEEVLYPAMEDYQLDIMIGEGPAARSIKIDLPPFTLIGATTRAGSLTSPLRDRFGIVQRLEFYQVPDLQHIVGRSARHMGLEMSDDGALEVARRARGTPRIANRLLRRVRDFAEVKHDGAISAEIAAQALDMLNVDAEGFDYMDRKLLLAVIDKFFGGPVGLDNLAAAIGEERETIEDVLEPYLIQQGFLQRTPRGRMATVRAWNHFGITPPEMP</sequence>
<reference key="1">
    <citation type="journal article" date="2001" name="Nature">
        <title>Complete genome sequence of Salmonella enterica serovar Typhimurium LT2.</title>
        <authorList>
            <person name="McClelland M."/>
            <person name="Sanderson K.E."/>
            <person name="Spieth J."/>
            <person name="Clifton S.W."/>
            <person name="Latreille P."/>
            <person name="Courtney L."/>
            <person name="Porwollik S."/>
            <person name="Ali J."/>
            <person name="Dante M."/>
            <person name="Du F."/>
            <person name="Hou S."/>
            <person name="Layman D."/>
            <person name="Leonard S."/>
            <person name="Nguyen C."/>
            <person name="Scott K."/>
            <person name="Holmes A."/>
            <person name="Grewal N."/>
            <person name="Mulvaney E."/>
            <person name="Ryan E."/>
            <person name="Sun H."/>
            <person name="Florea L."/>
            <person name="Miller W."/>
            <person name="Stoneking T."/>
            <person name="Nhan M."/>
            <person name="Waterston R."/>
            <person name="Wilson R.K."/>
        </authorList>
    </citation>
    <scope>NUCLEOTIDE SEQUENCE [LARGE SCALE GENOMIC DNA]</scope>
    <source>
        <strain>LT2 / SGSC1412 / ATCC 700720</strain>
    </source>
</reference>
<reference key="2">
    <citation type="journal article" date="2022" name="Nature">
        <title>Mechanism of AAA+ ATPase-mediated RuvAB-Holliday junction branch migration.</title>
        <authorList>
            <person name="Wald J."/>
            <person name="Fahrenkamp D."/>
            <person name="Goessweiner-Mohr N."/>
            <person name="Lugmayr W."/>
            <person name="Ciccarelli L."/>
            <person name="Vesper O."/>
            <person name="Marlovits T.C."/>
        </authorList>
    </citation>
    <scope>FUNCTION</scope>
</reference>
<feature type="chain" id="PRO_0000165590" description="Holliday junction branch migration complex subunit RuvB">
    <location>
        <begin position="1"/>
        <end position="336"/>
    </location>
</feature>
<feature type="region of interest" description="Large ATPase domain (RuvB-L)" evidence="1">
    <location>
        <begin position="4"/>
        <end position="184"/>
    </location>
</feature>
<feature type="region of interest" description="Large ATPase domain (RuvB-L)" evidence="2">
    <location>
        <begin position="24"/>
        <end position="184"/>
    </location>
</feature>
<feature type="region of interest" description="Small ATPAse domain (RuvB-S)" evidence="1 2">
    <location>
        <begin position="185"/>
        <end position="255"/>
    </location>
</feature>
<feature type="region of interest" description="Head domain (RuvB-H)" evidence="1 2">
    <location>
        <begin position="258"/>
        <end position="336"/>
    </location>
</feature>
<feature type="binding site" evidence="1">
    <location>
        <position position="23"/>
    </location>
    <ligand>
        <name>ATP</name>
        <dbReference type="ChEBI" id="CHEBI:30616"/>
    </ligand>
</feature>
<feature type="binding site" evidence="1">
    <location>
        <position position="24"/>
    </location>
    <ligand>
        <name>ATP</name>
        <dbReference type="ChEBI" id="CHEBI:30616"/>
    </ligand>
</feature>
<feature type="binding site" evidence="1">
    <location>
        <position position="65"/>
    </location>
    <ligand>
        <name>ATP</name>
        <dbReference type="ChEBI" id="CHEBI:30616"/>
    </ligand>
</feature>
<feature type="binding site" evidence="1">
    <location>
        <position position="68"/>
    </location>
    <ligand>
        <name>ATP</name>
        <dbReference type="ChEBI" id="CHEBI:30616"/>
    </ligand>
</feature>
<feature type="binding site" evidence="1">
    <location>
        <position position="69"/>
    </location>
    <ligand>
        <name>ATP</name>
        <dbReference type="ChEBI" id="CHEBI:30616"/>
    </ligand>
</feature>
<feature type="binding site" evidence="1">
    <location>
        <position position="69"/>
    </location>
    <ligand>
        <name>Mg(2+)</name>
        <dbReference type="ChEBI" id="CHEBI:18420"/>
    </ligand>
</feature>
<feature type="binding site" evidence="1">
    <location>
        <position position="70"/>
    </location>
    <ligand>
        <name>ATP</name>
        <dbReference type="ChEBI" id="CHEBI:30616"/>
    </ligand>
</feature>
<feature type="binding site" evidence="1">
    <location>
        <begin position="131"/>
        <end position="133"/>
    </location>
    <ligand>
        <name>ATP</name>
        <dbReference type="ChEBI" id="CHEBI:30616"/>
    </ligand>
</feature>
<feature type="binding site" evidence="1">
    <location>
        <position position="174"/>
    </location>
    <ligand>
        <name>ATP</name>
        <dbReference type="ChEBI" id="CHEBI:30616"/>
    </ligand>
</feature>
<feature type="binding site" evidence="1">
    <location>
        <position position="184"/>
    </location>
    <ligand>
        <name>ATP</name>
        <dbReference type="ChEBI" id="CHEBI:30616"/>
    </ligand>
</feature>
<feature type="binding site" evidence="1">
    <location>
        <position position="221"/>
    </location>
    <ligand>
        <name>ATP</name>
        <dbReference type="ChEBI" id="CHEBI:30616"/>
    </ligand>
</feature>
<feature type="binding site" evidence="1">
    <location>
        <position position="294"/>
    </location>
    <ligand>
        <name>DNA</name>
        <dbReference type="ChEBI" id="CHEBI:16991"/>
    </ligand>
</feature>
<feature type="binding site" evidence="1">
    <location>
        <position position="313"/>
    </location>
    <ligand>
        <name>DNA</name>
        <dbReference type="ChEBI" id="CHEBI:16991"/>
    </ligand>
</feature>
<feature type="binding site" evidence="1">
    <location>
        <position position="318"/>
    </location>
    <ligand>
        <name>DNA</name>
        <dbReference type="ChEBI" id="CHEBI:16991"/>
    </ligand>
</feature>
<name>RUVB_SALTY</name>
<proteinExistence type="inferred from homology"/>
<accession>P66755</accession>
<accession>Q8XF35</accession>
<gene>
    <name evidence="1 3" type="primary">ruvB</name>
    <name type="ordered locus">STM1894</name>
</gene>
<organism>
    <name type="scientific">Salmonella typhimurium (strain LT2 / SGSC1412 / ATCC 700720)</name>
    <dbReference type="NCBI Taxonomy" id="99287"/>
    <lineage>
        <taxon>Bacteria</taxon>
        <taxon>Pseudomonadati</taxon>
        <taxon>Pseudomonadota</taxon>
        <taxon>Gammaproteobacteria</taxon>
        <taxon>Enterobacterales</taxon>
        <taxon>Enterobacteriaceae</taxon>
        <taxon>Salmonella</taxon>
    </lineage>
</organism>
<evidence type="ECO:0000255" key="1">
    <source>
        <dbReference type="HAMAP-Rule" id="MF_00016"/>
    </source>
</evidence>
<evidence type="ECO:0000269" key="2">
    <source>
    </source>
</evidence>
<evidence type="ECO:0000303" key="3">
    <source>
    </source>
</evidence>
<keyword id="KW-0067">ATP-binding</keyword>
<keyword id="KW-0963">Cytoplasm</keyword>
<keyword id="KW-0227">DNA damage</keyword>
<keyword id="KW-0233">DNA recombination</keyword>
<keyword id="KW-0234">DNA repair</keyword>
<keyword id="KW-0238">DNA-binding</keyword>
<keyword id="KW-0378">Hydrolase</keyword>
<keyword id="KW-0547">Nucleotide-binding</keyword>
<keyword id="KW-1185">Reference proteome</keyword>
<dbReference type="EC" id="3.6.4.-" evidence="1"/>
<dbReference type="EMBL" id="AE006468">
    <property type="protein sequence ID" value="AAL20810.1"/>
    <property type="molecule type" value="Genomic_DNA"/>
</dbReference>
<dbReference type="RefSeq" id="NP_460851.1">
    <property type="nucleotide sequence ID" value="NC_003197.2"/>
</dbReference>
<dbReference type="RefSeq" id="WP_000568508.1">
    <property type="nucleotide sequence ID" value="NC_003197.2"/>
</dbReference>
<dbReference type="SMR" id="P66755"/>
<dbReference type="STRING" id="99287.STM1894"/>
<dbReference type="PaxDb" id="99287-STM1894"/>
<dbReference type="GeneID" id="1253415"/>
<dbReference type="KEGG" id="stm:STM1894"/>
<dbReference type="PATRIC" id="fig|99287.12.peg.2008"/>
<dbReference type="HOGENOM" id="CLU_055599_1_0_6"/>
<dbReference type="OMA" id="IHRMSRP"/>
<dbReference type="PhylomeDB" id="P66755"/>
<dbReference type="BioCyc" id="SENT99287:STM1894-MONOMER"/>
<dbReference type="Proteomes" id="UP000001014">
    <property type="component" value="Chromosome"/>
</dbReference>
<dbReference type="GO" id="GO:0005737">
    <property type="term" value="C:cytoplasm"/>
    <property type="evidence" value="ECO:0007669"/>
    <property type="project" value="UniProtKB-SubCell"/>
</dbReference>
<dbReference type="GO" id="GO:0048476">
    <property type="term" value="C:Holliday junction resolvase complex"/>
    <property type="evidence" value="ECO:0007669"/>
    <property type="project" value="UniProtKB-UniRule"/>
</dbReference>
<dbReference type="GO" id="GO:0005524">
    <property type="term" value="F:ATP binding"/>
    <property type="evidence" value="ECO:0007669"/>
    <property type="project" value="UniProtKB-UniRule"/>
</dbReference>
<dbReference type="GO" id="GO:0016887">
    <property type="term" value="F:ATP hydrolysis activity"/>
    <property type="evidence" value="ECO:0007669"/>
    <property type="project" value="InterPro"/>
</dbReference>
<dbReference type="GO" id="GO:0000400">
    <property type="term" value="F:four-way junction DNA binding"/>
    <property type="evidence" value="ECO:0007669"/>
    <property type="project" value="UniProtKB-UniRule"/>
</dbReference>
<dbReference type="GO" id="GO:0009378">
    <property type="term" value="F:four-way junction helicase activity"/>
    <property type="evidence" value="ECO:0007669"/>
    <property type="project" value="InterPro"/>
</dbReference>
<dbReference type="GO" id="GO:0006310">
    <property type="term" value="P:DNA recombination"/>
    <property type="evidence" value="ECO:0007669"/>
    <property type="project" value="UniProtKB-UniRule"/>
</dbReference>
<dbReference type="GO" id="GO:0006281">
    <property type="term" value="P:DNA repair"/>
    <property type="evidence" value="ECO:0007669"/>
    <property type="project" value="UniProtKB-UniRule"/>
</dbReference>
<dbReference type="CDD" id="cd00009">
    <property type="entry name" value="AAA"/>
    <property type="match status" value="1"/>
</dbReference>
<dbReference type="FunFam" id="1.10.10.10:FF:000086">
    <property type="entry name" value="Holliday junction ATP-dependent DNA helicase RuvB"/>
    <property type="match status" value="1"/>
</dbReference>
<dbReference type="FunFam" id="1.10.8.60:FF:000023">
    <property type="entry name" value="Holliday junction ATP-dependent DNA helicase RuvB"/>
    <property type="match status" value="1"/>
</dbReference>
<dbReference type="FunFam" id="3.40.50.300:FF:000073">
    <property type="entry name" value="Holliday junction ATP-dependent DNA helicase RuvB"/>
    <property type="match status" value="1"/>
</dbReference>
<dbReference type="Gene3D" id="1.10.8.60">
    <property type="match status" value="1"/>
</dbReference>
<dbReference type="Gene3D" id="3.40.50.300">
    <property type="entry name" value="P-loop containing nucleotide triphosphate hydrolases"/>
    <property type="match status" value="1"/>
</dbReference>
<dbReference type="Gene3D" id="1.10.10.10">
    <property type="entry name" value="Winged helix-like DNA-binding domain superfamily/Winged helix DNA-binding domain"/>
    <property type="match status" value="1"/>
</dbReference>
<dbReference type="HAMAP" id="MF_00016">
    <property type="entry name" value="DNA_HJ_migration_RuvB"/>
    <property type="match status" value="1"/>
</dbReference>
<dbReference type="InterPro" id="IPR003593">
    <property type="entry name" value="AAA+_ATPase"/>
</dbReference>
<dbReference type="InterPro" id="IPR041445">
    <property type="entry name" value="AAA_lid_4"/>
</dbReference>
<dbReference type="InterPro" id="IPR004605">
    <property type="entry name" value="DNA_helicase_Holl-junc_RuvB"/>
</dbReference>
<dbReference type="InterPro" id="IPR027417">
    <property type="entry name" value="P-loop_NTPase"/>
</dbReference>
<dbReference type="InterPro" id="IPR008824">
    <property type="entry name" value="RuvB-like_N"/>
</dbReference>
<dbReference type="InterPro" id="IPR008823">
    <property type="entry name" value="RuvB_C"/>
</dbReference>
<dbReference type="InterPro" id="IPR036388">
    <property type="entry name" value="WH-like_DNA-bd_sf"/>
</dbReference>
<dbReference type="InterPro" id="IPR036390">
    <property type="entry name" value="WH_DNA-bd_sf"/>
</dbReference>
<dbReference type="NCBIfam" id="NF000868">
    <property type="entry name" value="PRK00080.1"/>
    <property type="match status" value="1"/>
</dbReference>
<dbReference type="NCBIfam" id="TIGR00635">
    <property type="entry name" value="ruvB"/>
    <property type="match status" value="1"/>
</dbReference>
<dbReference type="PANTHER" id="PTHR42848">
    <property type="match status" value="1"/>
</dbReference>
<dbReference type="PANTHER" id="PTHR42848:SF1">
    <property type="entry name" value="HOLLIDAY JUNCTION BRANCH MIGRATION COMPLEX SUBUNIT RUVB"/>
    <property type="match status" value="1"/>
</dbReference>
<dbReference type="Pfam" id="PF17864">
    <property type="entry name" value="AAA_lid_4"/>
    <property type="match status" value="1"/>
</dbReference>
<dbReference type="Pfam" id="PF05491">
    <property type="entry name" value="RuvB_C"/>
    <property type="match status" value="1"/>
</dbReference>
<dbReference type="Pfam" id="PF05496">
    <property type="entry name" value="RuvB_N"/>
    <property type="match status" value="1"/>
</dbReference>
<dbReference type="SMART" id="SM00382">
    <property type="entry name" value="AAA"/>
    <property type="match status" value="1"/>
</dbReference>
<dbReference type="SUPFAM" id="SSF52540">
    <property type="entry name" value="P-loop containing nucleoside triphosphate hydrolases"/>
    <property type="match status" value="1"/>
</dbReference>
<dbReference type="SUPFAM" id="SSF46785">
    <property type="entry name" value="Winged helix' DNA-binding domain"/>
    <property type="match status" value="1"/>
</dbReference>